<evidence type="ECO:0000255" key="1">
    <source>
        <dbReference type="HAMAP-Rule" id="MF_00501"/>
    </source>
</evidence>
<evidence type="ECO:0000305" key="2"/>
<comment type="function">
    <text evidence="1">Binds the 23S rRNA.</text>
</comment>
<comment type="cofactor">
    <cofactor evidence="1">
        <name>Zn(2+)</name>
        <dbReference type="ChEBI" id="CHEBI:29105"/>
    </cofactor>
    <text evidence="1">Binds 1 zinc ion per subunit.</text>
</comment>
<comment type="subunit">
    <text evidence="1">Part of the 50S ribosomal subunit.</text>
</comment>
<comment type="similarity">
    <text evidence="1">Belongs to the bacterial ribosomal protein bL31 family. Type A subfamily.</text>
</comment>
<gene>
    <name evidence="1" type="primary">rpmE</name>
    <name type="ordered locus">Rv1298</name>
    <name type="ORF">MTCY373.18</name>
</gene>
<keyword id="KW-0002">3D-structure</keyword>
<keyword id="KW-0479">Metal-binding</keyword>
<keyword id="KW-1185">Reference proteome</keyword>
<keyword id="KW-0687">Ribonucleoprotein</keyword>
<keyword id="KW-0689">Ribosomal protein</keyword>
<keyword id="KW-0694">RNA-binding</keyword>
<keyword id="KW-0699">rRNA-binding</keyword>
<keyword id="KW-0862">Zinc</keyword>
<name>RL31_MYCTU</name>
<proteinExistence type="evidence at protein level"/>
<feature type="chain" id="PRO_0000173132" description="Large ribosomal subunit protein bL31">
    <location>
        <begin position="1"/>
        <end position="80"/>
    </location>
</feature>
<feature type="binding site" evidence="1">
    <location>
        <position position="16"/>
    </location>
    <ligand>
        <name>Zn(2+)</name>
        <dbReference type="ChEBI" id="CHEBI:29105"/>
    </ligand>
</feature>
<feature type="binding site" evidence="1">
    <location>
        <position position="18"/>
    </location>
    <ligand>
        <name>Zn(2+)</name>
        <dbReference type="ChEBI" id="CHEBI:29105"/>
    </ligand>
</feature>
<feature type="binding site" evidence="1">
    <location>
        <position position="38"/>
    </location>
    <ligand>
        <name>Zn(2+)</name>
        <dbReference type="ChEBI" id="CHEBI:29105"/>
    </ligand>
</feature>
<feature type="binding site" evidence="1">
    <location>
        <position position="41"/>
    </location>
    <ligand>
        <name>Zn(2+)</name>
        <dbReference type="ChEBI" id="CHEBI:29105"/>
    </ligand>
</feature>
<sequence>MKSDIHPAYEETTVVCGCGNTFQTRSTKPGGRIVVEVCSQCHPFYTGKQKILDSGGRVARFEKRYGKRKVGADKAVSTGK</sequence>
<accession>P9WHA1</accession>
<accession>L0T7V3</accession>
<accession>P66187</accession>
<accession>Q10608</accession>
<organism>
    <name type="scientific">Mycobacterium tuberculosis (strain ATCC 25618 / H37Rv)</name>
    <dbReference type="NCBI Taxonomy" id="83332"/>
    <lineage>
        <taxon>Bacteria</taxon>
        <taxon>Bacillati</taxon>
        <taxon>Actinomycetota</taxon>
        <taxon>Actinomycetes</taxon>
        <taxon>Mycobacteriales</taxon>
        <taxon>Mycobacteriaceae</taxon>
        <taxon>Mycobacterium</taxon>
        <taxon>Mycobacterium tuberculosis complex</taxon>
    </lineage>
</organism>
<reference key="1">
    <citation type="journal article" date="1998" name="Nature">
        <title>Deciphering the biology of Mycobacterium tuberculosis from the complete genome sequence.</title>
        <authorList>
            <person name="Cole S.T."/>
            <person name="Brosch R."/>
            <person name="Parkhill J."/>
            <person name="Garnier T."/>
            <person name="Churcher C.M."/>
            <person name="Harris D.E."/>
            <person name="Gordon S.V."/>
            <person name="Eiglmeier K."/>
            <person name="Gas S."/>
            <person name="Barry C.E. III"/>
            <person name="Tekaia F."/>
            <person name="Badcock K."/>
            <person name="Basham D."/>
            <person name="Brown D."/>
            <person name="Chillingworth T."/>
            <person name="Connor R."/>
            <person name="Davies R.M."/>
            <person name="Devlin K."/>
            <person name="Feltwell T."/>
            <person name="Gentles S."/>
            <person name="Hamlin N."/>
            <person name="Holroyd S."/>
            <person name="Hornsby T."/>
            <person name="Jagels K."/>
            <person name="Krogh A."/>
            <person name="McLean J."/>
            <person name="Moule S."/>
            <person name="Murphy L.D."/>
            <person name="Oliver S."/>
            <person name="Osborne J."/>
            <person name="Quail M.A."/>
            <person name="Rajandream M.A."/>
            <person name="Rogers J."/>
            <person name="Rutter S."/>
            <person name="Seeger K."/>
            <person name="Skelton S."/>
            <person name="Squares S."/>
            <person name="Squares R."/>
            <person name="Sulston J.E."/>
            <person name="Taylor K."/>
            <person name="Whitehead S."/>
            <person name="Barrell B.G."/>
        </authorList>
    </citation>
    <scope>NUCLEOTIDE SEQUENCE [LARGE SCALE GENOMIC DNA]</scope>
    <source>
        <strain>ATCC 25618 / H37Rv</strain>
    </source>
</reference>
<reference key="2">
    <citation type="journal article" date="2011" name="Mol. Cell. Proteomics">
        <title>Proteogenomic analysis of Mycobacterium tuberculosis by high resolution mass spectrometry.</title>
        <authorList>
            <person name="Kelkar D.S."/>
            <person name="Kumar D."/>
            <person name="Kumar P."/>
            <person name="Balakrishnan L."/>
            <person name="Muthusamy B."/>
            <person name="Yadav A.K."/>
            <person name="Shrivastava P."/>
            <person name="Marimuthu A."/>
            <person name="Anand S."/>
            <person name="Sundaram H."/>
            <person name="Kingsbury R."/>
            <person name="Harsha H.C."/>
            <person name="Nair B."/>
            <person name="Prasad T.S."/>
            <person name="Chauhan D.S."/>
            <person name="Katoch K."/>
            <person name="Katoch V.M."/>
            <person name="Kumar P."/>
            <person name="Chaerkady R."/>
            <person name="Ramachandran S."/>
            <person name="Dash D."/>
            <person name="Pandey A."/>
        </authorList>
    </citation>
    <scope>IDENTIFICATION BY MASS SPECTROMETRY [LARGE SCALE ANALYSIS]</scope>
    <source>
        <strain>ATCC 25618 / H37Rv</strain>
    </source>
</reference>
<protein>
    <recommendedName>
        <fullName evidence="1">Large ribosomal subunit protein bL31</fullName>
    </recommendedName>
    <alternativeName>
        <fullName evidence="2">50S ribosomal protein L31</fullName>
    </alternativeName>
</protein>
<dbReference type="EMBL" id="AL123456">
    <property type="protein sequence ID" value="CCP44055.1"/>
    <property type="molecule type" value="Genomic_DNA"/>
</dbReference>
<dbReference type="PIR" id="F70773">
    <property type="entry name" value="F70773"/>
</dbReference>
<dbReference type="RefSeq" id="NP_215814.1">
    <property type="nucleotide sequence ID" value="NC_000962.3"/>
</dbReference>
<dbReference type="RefSeq" id="WP_003406668.1">
    <property type="nucleotide sequence ID" value="NZ_NVQJ01000030.1"/>
</dbReference>
<dbReference type="PDB" id="5V7Q">
    <property type="method" value="EM"/>
    <property type="resolution" value="3.70 A"/>
    <property type="chains" value="6=1-80"/>
</dbReference>
<dbReference type="PDB" id="5V93">
    <property type="method" value="EM"/>
    <property type="resolution" value="4.00 A"/>
    <property type="chains" value="6=1-80"/>
</dbReference>
<dbReference type="PDB" id="7KGB">
    <property type="method" value="EM"/>
    <property type="resolution" value="2.70 A"/>
    <property type="chains" value="6=1-80"/>
</dbReference>
<dbReference type="PDB" id="7MSC">
    <property type="method" value="EM"/>
    <property type="resolution" value="2.97 A"/>
    <property type="chains" value="6=1-80"/>
</dbReference>
<dbReference type="PDB" id="7MSH">
    <property type="method" value="EM"/>
    <property type="resolution" value="3.23 A"/>
    <property type="chains" value="6=1-80"/>
</dbReference>
<dbReference type="PDB" id="7MSM">
    <property type="method" value="EM"/>
    <property type="resolution" value="2.79 A"/>
    <property type="chains" value="6=1-80"/>
</dbReference>
<dbReference type="PDB" id="7MSZ">
    <property type="method" value="EM"/>
    <property type="resolution" value="3.10 A"/>
    <property type="chains" value="6=1-80"/>
</dbReference>
<dbReference type="PDB" id="7MT2">
    <property type="method" value="EM"/>
    <property type="resolution" value="2.76 A"/>
    <property type="chains" value="6=1-80"/>
</dbReference>
<dbReference type="PDB" id="7MT3">
    <property type="method" value="EM"/>
    <property type="resolution" value="2.80 A"/>
    <property type="chains" value="6=1-80"/>
</dbReference>
<dbReference type="PDB" id="7MT7">
    <property type="method" value="EM"/>
    <property type="resolution" value="2.71 A"/>
    <property type="chains" value="6=1-80"/>
</dbReference>
<dbReference type="PDB" id="7SFR">
    <property type="method" value="EM"/>
    <property type="resolution" value="2.60 A"/>
    <property type="chains" value="6=1-80"/>
</dbReference>
<dbReference type="PDBsum" id="5V7Q"/>
<dbReference type="PDBsum" id="5V93"/>
<dbReference type="PDBsum" id="7KGB"/>
<dbReference type="PDBsum" id="7MSC"/>
<dbReference type="PDBsum" id="7MSH"/>
<dbReference type="PDBsum" id="7MSM"/>
<dbReference type="PDBsum" id="7MSZ"/>
<dbReference type="PDBsum" id="7MT2"/>
<dbReference type="PDBsum" id="7MT3"/>
<dbReference type="PDBsum" id="7MT7"/>
<dbReference type="PDBsum" id="7SFR"/>
<dbReference type="EMDB" id="EMD-22865"/>
<dbReference type="EMDB" id="EMD-23961"/>
<dbReference type="EMDB" id="EMD-23962"/>
<dbReference type="EMDB" id="EMD-23969"/>
<dbReference type="EMDB" id="EMD-23972"/>
<dbReference type="EMDB" id="EMD-23974"/>
<dbReference type="EMDB" id="EMD-23975"/>
<dbReference type="EMDB" id="EMD-23976"/>
<dbReference type="EMDB" id="EMD-8645"/>
<dbReference type="SMR" id="P9WHA1"/>
<dbReference type="FunCoup" id="P9WHA1">
    <property type="interactions" value="89"/>
</dbReference>
<dbReference type="STRING" id="83332.Rv1298"/>
<dbReference type="PaxDb" id="83332-Rv1298"/>
<dbReference type="DNASU" id="886955"/>
<dbReference type="GeneID" id="45425272"/>
<dbReference type="GeneID" id="886955"/>
<dbReference type="KEGG" id="mtu:Rv1298"/>
<dbReference type="KEGG" id="mtv:RVBD_1298"/>
<dbReference type="TubercuList" id="Rv1298"/>
<dbReference type="eggNOG" id="COG0254">
    <property type="taxonomic scope" value="Bacteria"/>
</dbReference>
<dbReference type="InParanoid" id="P9WHA1"/>
<dbReference type="OrthoDB" id="9803251at2"/>
<dbReference type="PhylomeDB" id="P9WHA1"/>
<dbReference type="PRO" id="PR:P9WHA1"/>
<dbReference type="Proteomes" id="UP000001584">
    <property type="component" value="Chromosome"/>
</dbReference>
<dbReference type="GO" id="GO:1990904">
    <property type="term" value="C:ribonucleoprotein complex"/>
    <property type="evidence" value="ECO:0007669"/>
    <property type="project" value="UniProtKB-KW"/>
</dbReference>
<dbReference type="GO" id="GO:0005840">
    <property type="term" value="C:ribosome"/>
    <property type="evidence" value="ECO:0007669"/>
    <property type="project" value="UniProtKB-KW"/>
</dbReference>
<dbReference type="GO" id="GO:0046872">
    <property type="term" value="F:metal ion binding"/>
    <property type="evidence" value="ECO:0007669"/>
    <property type="project" value="UniProtKB-KW"/>
</dbReference>
<dbReference type="GO" id="GO:0019843">
    <property type="term" value="F:rRNA binding"/>
    <property type="evidence" value="ECO:0007669"/>
    <property type="project" value="UniProtKB-KW"/>
</dbReference>
<dbReference type="GO" id="GO:0003735">
    <property type="term" value="F:structural constituent of ribosome"/>
    <property type="evidence" value="ECO:0007669"/>
    <property type="project" value="InterPro"/>
</dbReference>
<dbReference type="GO" id="GO:0006412">
    <property type="term" value="P:translation"/>
    <property type="evidence" value="ECO:0007669"/>
    <property type="project" value="UniProtKB-UniRule"/>
</dbReference>
<dbReference type="Gene3D" id="4.10.830.30">
    <property type="entry name" value="Ribosomal protein L31"/>
    <property type="match status" value="1"/>
</dbReference>
<dbReference type="HAMAP" id="MF_00501">
    <property type="entry name" value="Ribosomal_bL31_1"/>
    <property type="match status" value="1"/>
</dbReference>
<dbReference type="InterPro" id="IPR034704">
    <property type="entry name" value="Ribosomal_bL28/bL31-like_sf"/>
</dbReference>
<dbReference type="InterPro" id="IPR002150">
    <property type="entry name" value="Ribosomal_bL31"/>
</dbReference>
<dbReference type="InterPro" id="IPR027491">
    <property type="entry name" value="Ribosomal_bL31_A"/>
</dbReference>
<dbReference type="InterPro" id="IPR042105">
    <property type="entry name" value="Ribosomal_bL31_sf"/>
</dbReference>
<dbReference type="NCBIfam" id="TIGR00105">
    <property type="entry name" value="L31"/>
    <property type="match status" value="1"/>
</dbReference>
<dbReference type="NCBIfam" id="NF000612">
    <property type="entry name" value="PRK00019.1"/>
    <property type="match status" value="1"/>
</dbReference>
<dbReference type="NCBIfam" id="NF001809">
    <property type="entry name" value="PRK00528.1"/>
    <property type="match status" value="1"/>
</dbReference>
<dbReference type="PANTHER" id="PTHR33280">
    <property type="entry name" value="50S RIBOSOMAL PROTEIN L31, CHLOROPLASTIC"/>
    <property type="match status" value="1"/>
</dbReference>
<dbReference type="PANTHER" id="PTHR33280:SF1">
    <property type="entry name" value="LARGE RIBOSOMAL SUBUNIT PROTEIN BL31C"/>
    <property type="match status" value="1"/>
</dbReference>
<dbReference type="Pfam" id="PF01197">
    <property type="entry name" value="Ribosomal_L31"/>
    <property type="match status" value="1"/>
</dbReference>
<dbReference type="PRINTS" id="PR01249">
    <property type="entry name" value="RIBOSOMALL31"/>
</dbReference>
<dbReference type="SUPFAM" id="SSF143800">
    <property type="entry name" value="L28p-like"/>
    <property type="match status" value="1"/>
</dbReference>
<dbReference type="PROSITE" id="PS01143">
    <property type="entry name" value="RIBOSOMAL_L31"/>
    <property type="match status" value="1"/>
</dbReference>